<feature type="chain" id="PRO_0000440242" description="Trimeric intracellular cation channel type 1B.2">
    <location>
        <begin position="1"/>
        <end position="313"/>
    </location>
</feature>
<feature type="topological domain" description="Lumenal" evidence="5">
    <location>
        <begin position="1"/>
        <end position="28"/>
    </location>
</feature>
<feature type="transmembrane region" description="Helical;Name=1" evidence="3">
    <location>
        <begin position="29"/>
        <end position="48"/>
    </location>
</feature>
<feature type="topological domain" description="Cytoplasmic" evidence="5">
    <location>
        <begin position="49"/>
        <end position="57"/>
    </location>
</feature>
<feature type="transmembrane region" description="Discontinuously helical;Name=2" evidence="3">
    <location>
        <begin position="58"/>
        <end position="82"/>
    </location>
</feature>
<feature type="topological domain" description="Lumenal" evidence="5">
    <location>
        <begin position="83"/>
        <end position="90"/>
    </location>
</feature>
<feature type="transmembrane region" description="Helical;Name=3" evidence="3">
    <location>
        <begin position="91"/>
        <end position="108"/>
    </location>
</feature>
<feature type="topological domain" description="Cytoplasmic" evidence="5">
    <location>
        <begin position="109"/>
        <end position="118"/>
    </location>
</feature>
<feature type="transmembrane region" description="Helical;Name=4" evidence="3">
    <location>
        <begin position="119"/>
        <end position="149"/>
    </location>
</feature>
<feature type="topological domain" description="Lumenal" evidence="5">
    <location>
        <begin position="150"/>
        <end position="151"/>
    </location>
</feature>
<feature type="transmembrane region" description="Discontinuously helical;Name=5" evidence="3">
    <location>
        <begin position="152"/>
        <end position="178"/>
    </location>
</feature>
<feature type="topological domain" description="Cytoplasmic" evidence="5">
    <location>
        <begin position="179"/>
        <end position="192"/>
    </location>
</feature>
<feature type="transmembrane region" description="Helical;Name=6" evidence="3">
    <location>
        <begin position="193"/>
        <end position="210"/>
    </location>
</feature>
<feature type="topological domain" description="Lumenal" evidence="5">
    <location>
        <begin position="211"/>
        <end position="216"/>
    </location>
</feature>
<feature type="transmembrane region" description="Helical;Name=7" evidence="3">
    <location>
        <begin position="217"/>
        <end position="239"/>
    </location>
</feature>
<feature type="topological domain" description="Cytoplasmic" evidence="5">
    <location>
        <begin position="240"/>
        <end position="313"/>
    </location>
</feature>
<feature type="binding site" evidence="8">
    <location>
        <position position="130"/>
    </location>
    <ligand>
        <name>a 1,2-diacyl-sn-glycero-3-phospho-(1D-myo-inositol-4,5-bisphosphate)</name>
        <dbReference type="ChEBI" id="CHEBI:58456"/>
    </ligand>
</feature>
<feature type="binding site" evidence="8">
    <location>
        <position position="134"/>
    </location>
    <ligand>
        <name>a 1,2-diacyl-sn-glycero-3-phospho-(1D-myo-inositol-4,5-bisphosphate)</name>
        <dbReference type="ChEBI" id="CHEBI:58456"/>
    </ligand>
</feature>
<feature type="binding site" evidence="8">
    <location>
        <position position="168"/>
    </location>
    <ligand>
        <name>a 1,2-diacyl-sn-glycero-3-phospho-(1D-myo-inositol-4,5-bisphosphate)</name>
        <dbReference type="ChEBI" id="CHEBI:58456"/>
    </ligand>
</feature>
<feature type="helix" evidence="9">
    <location>
        <begin position="11"/>
        <end position="24"/>
    </location>
</feature>
<feature type="helix" evidence="9">
    <location>
        <begin position="30"/>
        <end position="47"/>
    </location>
</feature>
<feature type="helix" evidence="9">
    <location>
        <begin position="51"/>
        <end position="57"/>
    </location>
</feature>
<feature type="helix" evidence="9">
    <location>
        <begin position="59"/>
        <end position="70"/>
    </location>
</feature>
<feature type="helix" evidence="9">
    <location>
        <begin position="72"/>
        <end position="81"/>
    </location>
</feature>
<feature type="helix" evidence="9">
    <location>
        <begin position="87"/>
        <end position="90"/>
    </location>
</feature>
<feature type="helix" evidence="9">
    <location>
        <begin position="92"/>
        <end position="107"/>
    </location>
</feature>
<feature type="helix" evidence="9">
    <location>
        <begin position="109"/>
        <end position="111"/>
    </location>
</feature>
<feature type="helix" evidence="9">
    <location>
        <begin position="112"/>
        <end position="117"/>
    </location>
</feature>
<feature type="helix" evidence="9">
    <location>
        <begin position="120"/>
        <end position="148"/>
    </location>
</feature>
<feature type="helix" evidence="9">
    <location>
        <begin position="153"/>
        <end position="165"/>
    </location>
</feature>
<feature type="helix" evidence="9">
    <location>
        <begin position="167"/>
        <end position="177"/>
    </location>
</feature>
<feature type="helix" evidence="9">
    <location>
        <begin position="194"/>
        <end position="209"/>
    </location>
</feature>
<feature type="helix" evidence="9">
    <location>
        <begin position="218"/>
        <end position="238"/>
    </location>
</feature>
<dbReference type="EMBL" id="BX284602">
    <property type="protein sequence ID" value="CAB55033.2"/>
    <property type="molecule type" value="Genomic_DNA"/>
</dbReference>
<dbReference type="PIR" id="T31650">
    <property type="entry name" value="T31650"/>
</dbReference>
<dbReference type="RefSeq" id="NP_496606.2">
    <property type="nucleotide sequence ID" value="NM_064205.3"/>
</dbReference>
<dbReference type="PDB" id="5EIK">
    <property type="method" value="X-ray"/>
    <property type="resolution" value="2.30 A"/>
    <property type="chains" value="A=1-252"/>
</dbReference>
<dbReference type="PDBsum" id="5EIK"/>
<dbReference type="SMR" id="Q9NA73"/>
<dbReference type="FunCoup" id="Q9NA73">
    <property type="interactions" value="1619"/>
</dbReference>
<dbReference type="STRING" id="6239.Y57A10A.28.1"/>
<dbReference type="TCDB" id="1.A.62.1.4">
    <property type="family name" value="the homotrimeric cation channel (tric) family"/>
</dbReference>
<dbReference type="PaxDb" id="6239-Y57A10A.28"/>
<dbReference type="PeptideAtlas" id="Q9NA73"/>
<dbReference type="EnsemblMetazoa" id="Y57A10A.28.1">
    <property type="protein sequence ID" value="Y57A10A.28.1"/>
    <property type="gene ID" value="WBGene00013268"/>
</dbReference>
<dbReference type="GeneID" id="190342"/>
<dbReference type="KEGG" id="cel:CELE_Y57A10A.28"/>
<dbReference type="UCSC" id="Y57A10A.28">
    <property type="organism name" value="c. elegans"/>
</dbReference>
<dbReference type="AGR" id="WB:WBGene00013268"/>
<dbReference type="CTD" id="190342"/>
<dbReference type="WormBase" id="Y57A10A.28">
    <property type="protein sequence ID" value="CE35686"/>
    <property type="gene ID" value="WBGene00013268"/>
    <property type="gene designation" value="tric-1B.2"/>
</dbReference>
<dbReference type="eggNOG" id="KOG3944">
    <property type="taxonomic scope" value="Eukaryota"/>
</dbReference>
<dbReference type="GeneTree" id="ENSGT00390000018845"/>
<dbReference type="HOGENOM" id="CLU_076376_0_0_1"/>
<dbReference type="InParanoid" id="Q9NA73"/>
<dbReference type="OMA" id="DEWSIDH"/>
<dbReference type="OrthoDB" id="195817at2759"/>
<dbReference type="PhylomeDB" id="Q9NA73"/>
<dbReference type="PRO" id="PR:Q9NA73"/>
<dbReference type="Proteomes" id="UP000001940">
    <property type="component" value="Chromosome II"/>
</dbReference>
<dbReference type="Bgee" id="WBGene00013268">
    <property type="expression patterns" value="Expressed in embryo and 3 other cell types or tissues"/>
</dbReference>
<dbReference type="GO" id="GO:0005789">
    <property type="term" value="C:endoplasmic reticulum membrane"/>
    <property type="evidence" value="ECO:0007669"/>
    <property type="project" value="UniProtKB-SubCell"/>
</dbReference>
<dbReference type="GO" id="GO:0042802">
    <property type="term" value="F:identical protein binding"/>
    <property type="evidence" value="ECO:0007669"/>
    <property type="project" value="InterPro"/>
</dbReference>
<dbReference type="GO" id="GO:0005267">
    <property type="term" value="F:potassium channel activity"/>
    <property type="evidence" value="ECO:0007669"/>
    <property type="project" value="UniProtKB-KW"/>
</dbReference>
<dbReference type="InterPro" id="IPR007866">
    <property type="entry name" value="TRIC_channel"/>
</dbReference>
<dbReference type="PANTHER" id="PTHR12454">
    <property type="entry name" value="TRIMERIC INTRACELLULAR CATION CHANNEL"/>
    <property type="match status" value="1"/>
</dbReference>
<dbReference type="PANTHER" id="PTHR12454:SF18">
    <property type="entry name" value="TRIMERIC INTRACELLULAR CATION CHANNEL TYPE 1B.2"/>
    <property type="match status" value="1"/>
</dbReference>
<dbReference type="Pfam" id="PF05197">
    <property type="entry name" value="TRIC"/>
    <property type="match status" value="1"/>
</dbReference>
<reference evidence="6" key="1">
    <citation type="journal article" date="1998" name="Science">
        <title>Genome sequence of the nematode C. elegans: a platform for investigating biology.</title>
        <authorList>
            <consortium name="The C. elegans sequencing consortium"/>
        </authorList>
    </citation>
    <scope>NUCLEOTIDE SEQUENCE [LARGE SCALE GENOMIC DNA]</scope>
    <source>
        <strain>Bristol N2</strain>
    </source>
</reference>
<reference evidence="8" key="2">
    <citation type="journal article" date="2016" name="Nature">
        <title>Pore architecture of TRIC channels and insights into their gating mechanism.</title>
        <authorList>
            <person name="Yang H."/>
            <person name="Hu M."/>
            <person name="Guo J."/>
            <person name="Ou X."/>
            <person name="Cai T."/>
            <person name="Liu Z."/>
        </authorList>
    </citation>
    <scope>X-RAY CRYSTALLOGRAPHY (2.3 ANGSTROMS) OF 1-252 IN COMPLEX WITH PIP2</scope>
    <scope>FUNCTION</scope>
    <scope>SUBUNIT</scope>
    <scope>TOPOLOGY</scope>
</reference>
<evidence type="ECO:0000250" key="1">
    <source>
        <dbReference type="UniProtKB" id="Q9DAV9"/>
    </source>
</evidence>
<evidence type="ECO:0000250" key="2">
    <source>
        <dbReference type="UniProtKB" id="Q9NA75"/>
    </source>
</evidence>
<evidence type="ECO:0000269" key="3">
    <source>
    </source>
</evidence>
<evidence type="ECO:0000305" key="4"/>
<evidence type="ECO:0000305" key="5">
    <source>
    </source>
</evidence>
<evidence type="ECO:0000312" key="6">
    <source>
        <dbReference type="Proteomes" id="UP000001940"/>
    </source>
</evidence>
<evidence type="ECO:0000312" key="7">
    <source>
        <dbReference type="WormBase" id="Y57A10A.28"/>
    </source>
</evidence>
<evidence type="ECO:0007744" key="8">
    <source>
        <dbReference type="PDB" id="5EIK"/>
    </source>
</evidence>
<evidence type="ECO:0007829" key="9">
    <source>
        <dbReference type="PDB" id="5EIK"/>
    </source>
</evidence>
<organism evidence="6">
    <name type="scientific">Caenorhabditis elegans</name>
    <dbReference type="NCBI Taxonomy" id="6239"/>
    <lineage>
        <taxon>Eukaryota</taxon>
        <taxon>Metazoa</taxon>
        <taxon>Ecdysozoa</taxon>
        <taxon>Nematoda</taxon>
        <taxon>Chromadorea</taxon>
        <taxon>Rhabditida</taxon>
        <taxon>Rhabditina</taxon>
        <taxon>Rhabditomorpha</taxon>
        <taxon>Rhabditoidea</taxon>
        <taxon>Rhabditidae</taxon>
        <taxon>Peloderinae</taxon>
        <taxon>Caenorhabditis</taxon>
    </lineage>
</organism>
<gene>
    <name evidence="7" type="primary">tric-1B.2</name>
    <name evidence="7" type="ORF">Y57A10A.28</name>
</gene>
<sequence length="313" mass="35019">MGWVPDEWSIDHDTLIDAGGYVQKLKLYPYFDAAHYVLTCLSVRHDLGPDAISFSRKHPFSCWLSCMLMSFAGSFLSCFLLGEPIISPLKQHADILLGSIVWYLVFYSPFDVVFRLATWFPVKLGLSVLKEVQRTHKIAAGVKHAVRIYPESYLVQILVGVAKGAGSGVVKIVEQLARGTWHPTNHEILRPSFTTKACVIASIVFTLERHSMYVTAPHDLVYLCVVGFFIYFKLASLCLSVHDVLMPIENVLCAVFMGGIIDAFAKAVDATKKAIHSNRVLSEEEILSKEREKVLKKKKLLAQMSNGTDKKNN</sequence>
<accession>Q9NA73</accession>
<name>T38B2_CAEEL</name>
<proteinExistence type="evidence at protein level"/>
<comment type="function">
    <text evidence="1 2 3">Potassium channel that mediates transmembrane potassium transport (By similarity). Might be required for maintenance of rapid intracellular calcium release (By similarity). May act as a potassium counter-ion channel that functions in synchronization with calcium release from intracellular stores (By similarity). Binds phosphatidylinositol 4,5-bisphosphate (PIP2) (PubMed:27698420).</text>
</comment>
<comment type="subunit">
    <text evidence="3">Homotrimer; trimerization probably requires binding to phosphatidylinositol 4,5-bisphosphate (PIP2).</text>
</comment>
<comment type="subcellular location">
    <subcellularLocation>
        <location evidence="1">Endoplasmic reticulum membrane</location>
        <topology evidence="1">Multi-pass membrane protein</topology>
    </subcellularLocation>
</comment>
<comment type="similarity">
    <text evidence="4">Belongs to the TMEM38 family.</text>
</comment>
<protein>
    <recommendedName>
        <fullName evidence="4">Trimeric intracellular cation channel type 1B.2</fullName>
        <shortName evidence="4">TRIC-1B.2</shortName>
    </recommendedName>
    <alternativeName>
        <fullName>TRIC-B2</fullName>
    </alternativeName>
</protein>
<keyword id="KW-0002">3D-structure</keyword>
<keyword id="KW-0256">Endoplasmic reticulum</keyword>
<keyword id="KW-0407">Ion channel</keyword>
<keyword id="KW-0406">Ion transport</keyword>
<keyword id="KW-0472">Membrane</keyword>
<keyword id="KW-0630">Potassium</keyword>
<keyword id="KW-0631">Potassium channel</keyword>
<keyword id="KW-0633">Potassium transport</keyword>
<keyword id="KW-1185">Reference proteome</keyword>
<keyword id="KW-0812">Transmembrane</keyword>
<keyword id="KW-1133">Transmembrane helix</keyword>
<keyword id="KW-0813">Transport</keyword>